<gene>
    <name evidence="1" type="primary">mtgA</name>
    <name type="ordered locus">Xfasm12_1239</name>
</gene>
<reference key="1">
    <citation type="journal article" date="2010" name="J. Bacteriol.">
        <title>Whole genome sequences of two Xylella fastidiosa strains (M12 and M23) causing almond leaf scorch disease in California.</title>
        <authorList>
            <person name="Chen J."/>
            <person name="Xie G."/>
            <person name="Han S."/>
            <person name="Chertkov O."/>
            <person name="Sims D."/>
            <person name="Civerolo E.L."/>
        </authorList>
    </citation>
    <scope>NUCLEOTIDE SEQUENCE [LARGE SCALE GENOMIC DNA]</scope>
    <source>
        <strain>M12</strain>
    </source>
</reference>
<comment type="function">
    <text evidence="1">Peptidoglycan polymerase that catalyzes glycan chain elongation from lipid-linked precursors.</text>
</comment>
<comment type="catalytic activity">
    <reaction evidence="1">
        <text>[GlcNAc-(1-&gt;4)-Mur2Ac(oyl-L-Ala-gamma-D-Glu-L-Lys-D-Ala-D-Ala)](n)-di-trans,octa-cis-undecaprenyl diphosphate + beta-D-GlcNAc-(1-&gt;4)-Mur2Ac(oyl-L-Ala-gamma-D-Glu-L-Lys-D-Ala-D-Ala)-di-trans,octa-cis-undecaprenyl diphosphate = [GlcNAc-(1-&gt;4)-Mur2Ac(oyl-L-Ala-gamma-D-Glu-L-Lys-D-Ala-D-Ala)](n+1)-di-trans,octa-cis-undecaprenyl diphosphate + di-trans,octa-cis-undecaprenyl diphosphate + H(+)</text>
        <dbReference type="Rhea" id="RHEA:23708"/>
        <dbReference type="Rhea" id="RHEA-COMP:9602"/>
        <dbReference type="Rhea" id="RHEA-COMP:9603"/>
        <dbReference type="ChEBI" id="CHEBI:15378"/>
        <dbReference type="ChEBI" id="CHEBI:58405"/>
        <dbReference type="ChEBI" id="CHEBI:60033"/>
        <dbReference type="ChEBI" id="CHEBI:78435"/>
        <dbReference type="EC" id="2.4.99.28"/>
    </reaction>
</comment>
<comment type="pathway">
    <text evidence="1">Cell wall biogenesis; peptidoglycan biosynthesis.</text>
</comment>
<comment type="subcellular location">
    <subcellularLocation>
        <location evidence="1">Cell inner membrane</location>
        <topology evidence="1">Single-pass membrane protein</topology>
    </subcellularLocation>
</comment>
<comment type="similarity">
    <text evidence="1">Belongs to the glycosyltransferase 51 family.</text>
</comment>
<evidence type="ECO:0000255" key="1">
    <source>
        <dbReference type="HAMAP-Rule" id="MF_00766"/>
    </source>
</evidence>
<feature type="chain" id="PRO_1000133614" description="Biosynthetic peptidoglycan transglycosylase">
    <location>
        <begin position="1"/>
        <end position="243"/>
    </location>
</feature>
<feature type="transmembrane region" description="Helical" evidence="1">
    <location>
        <begin position="21"/>
        <end position="43"/>
    </location>
</feature>
<accession>B0U2V1</accession>
<dbReference type="EC" id="2.4.99.28" evidence="1"/>
<dbReference type="EMBL" id="CP000941">
    <property type="protein sequence ID" value="ACA12180.1"/>
    <property type="molecule type" value="Genomic_DNA"/>
</dbReference>
<dbReference type="RefSeq" id="WP_004084920.1">
    <property type="nucleotide sequence ID" value="NC_010513.1"/>
</dbReference>
<dbReference type="SMR" id="B0U2V1"/>
<dbReference type="CAZy" id="GT51">
    <property type="family name" value="Glycosyltransferase Family 51"/>
</dbReference>
<dbReference type="KEGG" id="xfm:Xfasm12_1239"/>
<dbReference type="HOGENOM" id="CLU_006354_1_1_6"/>
<dbReference type="UniPathway" id="UPA00219"/>
<dbReference type="GO" id="GO:0009274">
    <property type="term" value="C:peptidoglycan-based cell wall"/>
    <property type="evidence" value="ECO:0007669"/>
    <property type="project" value="InterPro"/>
</dbReference>
<dbReference type="GO" id="GO:0005886">
    <property type="term" value="C:plasma membrane"/>
    <property type="evidence" value="ECO:0007669"/>
    <property type="project" value="UniProtKB-SubCell"/>
</dbReference>
<dbReference type="GO" id="GO:0016763">
    <property type="term" value="F:pentosyltransferase activity"/>
    <property type="evidence" value="ECO:0007669"/>
    <property type="project" value="InterPro"/>
</dbReference>
<dbReference type="GO" id="GO:0008955">
    <property type="term" value="F:peptidoglycan glycosyltransferase activity"/>
    <property type="evidence" value="ECO:0007669"/>
    <property type="project" value="UniProtKB-UniRule"/>
</dbReference>
<dbReference type="GO" id="GO:0071555">
    <property type="term" value="P:cell wall organization"/>
    <property type="evidence" value="ECO:0007669"/>
    <property type="project" value="UniProtKB-KW"/>
</dbReference>
<dbReference type="GO" id="GO:0009252">
    <property type="term" value="P:peptidoglycan biosynthetic process"/>
    <property type="evidence" value="ECO:0007669"/>
    <property type="project" value="UniProtKB-UniRule"/>
</dbReference>
<dbReference type="GO" id="GO:0008360">
    <property type="term" value="P:regulation of cell shape"/>
    <property type="evidence" value="ECO:0007669"/>
    <property type="project" value="UniProtKB-KW"/>
</dbReference>
<dbReference type="Gene3D" id="1.10.3810.10">
    <property type="entry name" value="Biosynthetic peptidoglycan transglycosylase-like"/>
    <property type="match status" value="1"/>
</dbReference>
<dbReference type="HAMAP" id="MF_00766">
    <property type="entry name" value="PGT_MtgA"/>
    <property type="match status" value="1"/>
</dbReference>
<dbReference type="InterPro" id="IPR001264">
    <property type="entry name" value="Glyco_trans_51"/>
</dbReference>
<dbReference type="InterPro" id="IPR023346">
    <property type="entry name" value="Lysozyme-like_dom_sf"/>
</dbReference>
<dbReference type="InterPro" id="IPR036950">
    <property type="entry name" value="PBP_transglycosylase"/>
</dbReference>
<dbReference type="InterPro" id="IPR011812">
    <property type="entry name" value="Pep_trsgly"/>
</dbReference>
<dbReference type="NCBIfam" id="TIGR02070">
    <property type="entry name" value="mono_pep_trsgly"/>
    <property type="match status" value="1"/>
</dbReference>
<dbReference type="PANTHER" id="PTHR30400:SF0">
    <property type="entry name" value="BIOSYNTHETIC PEPTIDOGLYCAN TRANSGLYCOSYLASE"/>
    <property type="match status" value="1"/>
</dbReference>
<dbReference type="PANTHER" id="PTHR30400">
    <property type="entry name" value="MONOFUNCTIONAL BIOSYNTHETIC PEPTIDOGLYCAN TRANSGLYCOSYLASE"/>
    <property type="match status" value="1"/>
</dbReference>
<dbReference type="Pfam" id="PF00912">
    <property type="entry name" value="Transgly"/>
    <property type="match status" value="1"/>
</dbReference>
<dbReference type="SUPFAM" id="SSF53955">
    <property type="entry name" value="Lysozyme-like"/>
    <property type="match status" value="1"/>
</dbReference>
<keyword id="KW-0997">Cell inner membrane</keyword>
<keyword id="KW-1003">Cell membrane</keyword>
<keyword id="KW-0133">Cell shape</keyword>
<keyword id="KW-0961">Cell wall biogenesis/degradation</keyword>
<keyword id="KW-0328">Glycosyltransferase</keyword>
<keyword id="KW-0472">Membrane</keyword>
<keyword id="KW-0573">Peptidoglycan synthesis</keyword>
<keyword id="KW-0808">Transferase</keyword>
<keyword id="KW-0812">Transmembrane</keyword>
<keyword id="KW-1133">Transmembrane helix</keyword>
<protein>
    <recommendedName>
        <fullName evidence="1">Biosynthetic peptidoglycan transglycosylase</fullName>
        <ecNumber evidence="1">2.4.99.28</ecNumber>
    </recommendedName>
    <alternativeName>
        <fullName evidence="1">Glycan polymerase</fullName>
    </alternativeName>
    <alternativeName>
        <fullName evidence="1">Peptidoglycan glycosyltransferase MtgA</fullName>
        <shortName evidence="1">PGT</shortName>
    </alternativeName>
</protein>
<sequence length="243" mass="28235">MYQWIQRDSDVHQRWIWCRRLLIVSLVSALMSVLQVIVFRFVDPPLSMTMVGRYLEAWSDRQWNFRLHYVWCDLEQIAPSVPISLVAAEDQRFPFHHGFDFDAIKNALGRHSRGGHLRGASTISQQVAKNLFLWSGRSFVRKGLEGWYTFWIELFWPKRRILEIYANIAEFGDGVYGVQAAARRYLGKGAADLDESDAAQLAAVLPSPRHYNIQHPGPYIRWRSSWIQRQAKQLGGSAYLDMH</sequence>
<name>MTGA_XYLFM</name>
<proteinExistence type="inferred from homology"/>
<organism>
    <name type="scientific">Xylella fastidiosa (strain M12)</name>
    <dbReference type="NCBI Taxonomy" id="405440"/>
    <lineage>
        <taxon>Bacteria</taxon>
        <taxon>Pseudomonadati</taxon>
        <taxon>Pseudomonadota</taxon>
        <taxon>Gammaproteobacteria</taxon>
        <taxon>Lysobacterales</taxon>
        <taxon>Lysobacteraceae</taxon>
        <taxon>Xylella</taxon>
    </lineage>
</organism>